<gene>
    <name evidence="11" type="primary">Adm2</name>
    <name type="synonym">Am2</name>
</gene>
<organism>
    <name type="scientific">Mus musculus</name>
    <name type="common">Mouse</name>
    <dbReference type="NCBI Taxonomy" id="10090"/>
    <lineage>
        <taxon>Eukaryota</taxon>
        <taxon>Metazoa</taxon>
        <taxon>Chordata</taxon>
        <taxon>Craniata</taxon>
        <taxon>Vertebrata</taxon>
        <taxon>Euteleostomi</taxon>
        <taxon>Mammalia</taxon>
        <taxon>Eutheria</taxon>
        <taxon>Euarchontoglires</taxon>
        <taxon>Glires</taxon>
        <taxon>Rodentia</taxon>
        <taxon>Myomorpha</taxon>
        <taxon>Muroidea</taxon>
        <taxon>Muridae</taxon>
        <taxon>Murinae</taxon>
        <taxon>Mus</taxon>
        <taxon>Mus</taxon>
    </lineage>
</organism>
<name>ADM2_MOUSE</name>
<sequence>MAQLLMVTVTLGCISLLYLLPGTLSGSLGKGLRHSRPREPPAKIPSSNLQPGHPSLQPVVWKSRRHAPQPQGRGNRALAMVHLPQGGGSRHPGPQRPTGSRRPHAQLLRVGCVLGTCQVQNLSHRLWQLVRPAGRRDSAPVDPSSPHSYG</sequence>
<keyword id="KW-0027">Amidation</keyword>
<keyword id="KW-0165">Cleavage on pair of basic residues</keyword>
<keyword id="KW-1015">Disulfide bond</keyword>
<keyword id="KW-0372">Hormone</keyword>
<keyword id="KW-1185">Reference proteome</keyword>
<keyword id="KW-0964">Secreted</keyword>
<keyword id="KW-0732">Signal</keyword>
<dbReference type="EMBL" id="AF529212">
    <property type="protein sequence ID" value="AAQ09099.1"/>
    <property type="molecule type" value="mRNA"/>
</dbReference>
<dbReference type="EMBL" id="AB121035">
    <property type="protein sequence ID" value="BAD07412.1"/>
    <property type="molecule type" value="mRNA"/>
</dbReference>
<dbReference type="EMBL" id="BC096428">
    <property type="protein sequence ID" value="AAH96428.1"/>
    <property type="molecule type" value="mRNA"/>
</dbReference>
<dbReference type="CCDS" id="CCDS27744.1"/>
<dbReference type="RefSeq" id="NP_891558.1">
    <property type="nucleotide sequence ID" value="NM_182928.5"/>
</dbReference>
<dbReference type="SMR" id="Q7TNK8"/>
<dbReference type="FunCoup" id="Q7TNK8">
    <property type="interactions" value="379"/>
</dbReference>
<dbReference type="STRING" id="10090.ENSMUSP00000064761"/>
<dbReference type="iPTMnet" id="Q7TNK8"/>
<dbReference type="PhosphoSitePlus" id="Q7TNK8"/>
<dbReference type="PaxDb" id="10090-ENSMUSP00000064761"/>
<dbReference type="ProteomicsDB" id="285728"/>
<dbReference type="Antibodypedia" id="52597">
    <property type="antibodies" value="163 antibodies from 19 providers"/>
</dbReference>
<dbReference type="Ensembl" id="ENSMUST00000066991.7">
    <property type="protein sequence ID" value="ENSMUSP00000064761.6"/>
    <property type="gene ID" value="ENSMUSG00000054136.7"/>
</dbReference>
<dbReference type="GeneID" id="223780"/>
<dbReference type="KEGG" id="mmu:223780"/>
<dbReference type="UCSC" id="uc007xgb.2">
    <property type="organism name" value="mouse"/>
</dbReference>
<dbReference type="AGR" id="MGI:2675256"/>
<dbReference type="CTD" id="79924"/>
<dbReference type="MGI" id="MGI:2675256">
    <property type="gene designation" value="Adm2"/>
</dbReference>
<dbReference type="VEuPathDB" id="HostDB:ENSMUSG00000054136"/>
<dbReference type="eggNOG" id="ENOG502S7F2">
    <property type="taxonomic scope" value="Eukaryota"/>
</dbReference>
<dbReference type="GeneTree" id="ENSGT00940000154380"/>
<dbReference type="HOGENOM" id="CLU_134508_0_0_1"/>
<dbReference type="InParanoid" id="Q7TNK8"/>
<dbReference type="OMA" id="VTFGCIS"/>
<dbReference type="OrthoDB" id="9907777at2759"/>
<dbReference type="PhylomeDB" id="Q7TNK8"/>
<dbReference type="TreeFam" id="TF338591"/>
<dbReference type="Reactome" id="R-MMU-418555">
    <property type="pathway name" value="G alpha (s) signalling events"/>
</dbReference>
<dbReference type="Reactome" id="R-MMU-419812">
    <property type="pathway name" value="Calcitonin-like ligand receptors"/>
</dbReference>
<dbReference type="BioGRID-ORCS" id="223780">
    <property type="hits" value="2 hits in 78 CRISPR screens"/>
</dbReference>
<dbReference type="PRO" id="PR:Q7TNK8"/>
<dbReference type="Proteomes" id="UP000000589">
    <property type="component" value="Chromosome 15"/>
</dbReference>
<dbReference type="RNAct" id="Q7TNK8">
    <property type="molecule type" value="protein"/>
</dbReference>
<dbReference type="Bgee" id="ENSMUSG00000054136">
    <property type="expression patterns" value="Expressed in animal zygote and 28 other cell types or tissues"/>
</dbReference>
<dbReference type="GO" id="GO:0005615">
    <property type="term" value="C:extracellular space"/>
    <property type="evidence" value="ECO:0007669"/>
    <property type="project" value="Ensembl"/>
</dbReference>
<dbReference type="GO" id="GO:0005179">
    <property type="term" value="F:hormone activity"/>
    <property type="evidence" value="ECO:0007669"/>
    <property type="project" value="UniProtKB-KW"/>
</dbReference>
<dbReference type="GO" id="GO:0044877">
    <property type="term" value="F:protein-containing complex binding"/>
    <property type="evidence" value="ECO:0007669"/>
    <property type="project" value="Ensembl"/>
</dbReference>
<dbReference type="GO" id="GO:0007189">
    <property type="term" value="P:adenylate cyclase-activating G protein-coupled receptor signaling pathway"/>
    <property type="evidence" value="ECO:0007669"/>
    <property type="project" value="Ensembl"/>
</dbReference>
<dbReference type="GO" id="GO:1990410">
    <property type="term" value="P:adrenomedullin receptor signaling pathway"/>
    <property type="evidence" value="ECO:0007669"/>
    <property type="project" value="Ensembl"/>
</dbReference>
<dbReference type="GO" id="GO:0001525">
    <property type="term" value="P:angiogenesis"/>
    <property type="evidence" value="ECO:0007669"/>
    <property type="project" value="Ensembl"/>
</dbReference>
<dbReference type="GO" id="GO:0007631">
    <property type="term" value="P:feeding behavior"/>
    <property type="evidence" value="ECO:0007669"/>
    <property type="project" value="Ensembl"/>
</dbReference>
<dbReference type="GO" id="GO:0045776">
    <property type="term" value="P:negative regulation of blood pressure"/>
    <property type="evidence" value="ECO:0007669"/>
    <property type="project" value="Ensembl"/>
</dbReference>
<dbReference type="GO" id="GO:0045766">
    <property type="term" value="P:positive regulation of angiogenesis"/>
    <property type="evidence" value="ECO:0000266"/>
    <property type="project" value="MGI"/>
</dbReference>
<dbReference type="GO" id="GO:0010628">
    <property type="term" value="P:positive regulation of gene expression"/>
    <property type="evidence" value="ECO:0007669"/>
    <property type="project" value="Ensembl"/>
</dbReference>
<dbReference type="InterPro" id="IPR051665">
    <property type="entry name" value="Adrenomedullin-reg_peptide"/>
</dbReference>
<dbReference type="PANTHER" id="PTHR23414">
    <property type="entry name" value="ADRENOMEDULLIN, ADM"/>
    <property type="match status" value="1"/>
</dbReference>
<dbReference type="PANTHER" id="PTHR23414:SF2">
    <property type="entry name" value="PROTEIN ADM2"/>
    <property type="match status" value="1"/>
</dbReference>
<proteinExistence type="evidence at transcript level"/>
<protein>
    <recommendedName>
        <fullName>Protein ADM2</fullName>
    </recommendedName>
    <alternativeName>
        <fullName evidence="9">Intermedin</fullName>
    </alternativeName>
    <component>
        <recommendedName>
            <fullName evidence="4">Adrenomedullin-2</fullName>
            <shortName>AM2</shortName>
        </recommendedName>
        <alternativeName>
            <fullName>Intermedin-long</fullName>
            <shortName>IMDL</shortName>
        </alternativeName>
    </component>
    <component>
        <recommendedName>
            <fullName>Intermedin-short</fullName>
            <shortName>IMDS</shortName>
        </recommendedName>
    </component>
</protein>
<evidence type="ECO:0000250" key="1"/>
<evidence type="ECO:0000250" key="2">
    <source>
        <dbReference type="UniProtKB" id="P35318"/>
    </source>
</evidence>
<evidence type="ECO:0000250" key="3">
    <source>
        <dbReference type="UniProtKB" id="P61312"/>
    </source>
</evidence>
<evidence type="ECO:0000250" key="4">
    <source>
        <dbReference type="UniProtKB" id="Q7Z4H4"/>
    </source>
</evidence>
<evidence type="ECO:0000255" key="5"/>
<evidence type="ECO:0000256" key="6">
    <source>
        <dbReference type="SAM" id="MobiDB-lite"/>
    </source>
</evidence>
<evidence type="ECO:0000269" key="7">
    <source>
    </source>
</evidence>
<evidence type="ECO:0000269" key="8">
    <source>
    </source>
</evidence>
<evidence type="ECO:0000303" key="9">
    <source>
    </source>
</evidence>
<evidence type="ECO:0000305" key="10"/>
<evidence type="ECO:0000312" key="11">
    <source>
        <dbReference type="MGI" id="MGI:2675256"/>
    </source>
</evidence>
<comment type="function">
    <text evidence="7 8">Intermedin/ADM2 is a peptide hormone that plays a role as physiological regulator of gastrointestinal and cardiovascular bioactivities mediated by the CALCRL-RAMPs receptor complexes (PubMed:14615490, PubMed:14706825). Activates the cAMP-dependent pathway through interaction with CALCRL-RAMP3 receptor complex (PubMed:14615490).</text>
</comment>
<comment type="subcellular location">
    <subcellularLocation>
        <location evidence="4">Secreted</location>
    </subcellularLocation>
</comment>
<comment type="tissue specificity">
    <text evidence="7 8">High expression detected in the submaxillary gland, kidney, stomach, and mesentery, followed by the pituitary, lung, pancreas, intestines, spleen, thymus and ovary. Expressed mainly in the intermediate lobe of the pituitary, with sporadic in the anterior lobe.</text>
</comment>
<comment type="similarity">
    <text evidence="10">Belongs to the adrenomedullin family.</text>
</comment>
<feature type="signal peptide" evidence="3">
    <location>
        <begin position="1"/>
        <end position="25"/>
    </location>
</feature>
<feature type="propeptide" id="PRO_0000000980" evidence="1">
    <location>
        <begin position="26"/>
        <end position="100"/>
    </location>
</feature>
<feature type="peptide" id="PRO_0000000981" description="Adrenomedullin-2" evidence="1">
    <location>
        <begin position="103"/>
        <end position="149"/>
    </location>
</feature>
<feature type="peptide" id="PRO_0000000982" description="Intermedin-short" evidence="5">
    <location>
        <begin position="110"/>
        <end position="149"/>
    </location>
</feature>
<feature type="region of interest" description="Disordered" evidence="6">
    <location>
        <begin position="28"/>
        <end position="102"/>
    </location>
</feature>
<feature type="site" description="Required for CALCRL receptor interaction" evidence="4">
    <location>
        <position position="109"/>
    </location>
</feature>
<feature type="site" description="Required for CALCRL receptor interaction" evidence="4">
    <location>
        <position position="116"/>
    </location>
</feature>
<feature type="site" description="Required for CALCRL receptor interaction" evidence="4">
    <location>
        <position position="121"/>
    </location>
</feature>
<feature type="modified residue" description="Tyrosine amide" evidence="2">
    <location>
        <position position="149"/>
    </location>
</feature>
<feature type="disulfide bond" evidence="4">
    <location>
        <begin position="112"/>
        <end position="117"/>
    </location>
</feature>
<accession>Q7TNK8</accession>
<accession>Q4VAE1</accession>
<reference key="1">
    <citation type="journal article" date="2004" name="J. Biol. Chem.">
        <title>Intermedin is a calcitonin/calcitonin gene-related peptide family peptide acting through the calcitonin receptor-like receptor/receptor activity-modifying protein receptor complexes.</title>
        <authorList>
            <person name="Roh J."/>
            <person name="Chang C.L."/>
            <person name="Bhalla A."/>
            <person name="Klein C."/>
            <person name="Hsu S.Y.T."/>
        </authorList>
    </citation>
    <scope>NUCLEOTIDE SEQUENCE [MRNA]</scope>
    <scope>FUNCTION</scope>
    <scope>TISSUE SPECIFICITY</scope>
    <source>
        <strain>C57BL/6J</strain>
    </source>
</reference>
<reference key="2">
    <citation type="journal article" date="2004" name="FEBS Lett.">
        <title>Identification of novel adrenomedullin in mammals: a potent cardiovascular and renal regulator.</title>
        <authorList>
            <person name="Takei Y."/>
            <person name="Inoue K."/>
            <person name="Ogoshi M."/>
            <person name="Kawahara T."/>
            <person name="Bannai H."/>
            <person name="Miyano S."/>
        </authorList>
    </citation>
    <scope>NUCLEOTIDE SEQUENCE [MRNA]</scope>
    <scope>FUNCTION</scope>
    <scope>TISSUE SPECIFICITY</scope>
    <source>
        <tissue>Kidney</tissue>
    </source>
</reference>
<reference key="3">
    <citation type="journal article" date="2004" name="Genome Res.">
        <title>The status, quality, and expansion of the NIH full-length cDNA project: the Mammalian Gene Collection (MGC).</title>
        <authorList>
            <consortium name="The MGC Project Team"/>
        </authorList>
    </citation>
    <scope>NUCLEOTIDE SEQUENCE [LARGE SCALE MRNA]</scope>
    <source>
        <strain>FVB/N</strain>
        <tissue>Mammary gland</tissue>
    </source>
</reference>